<accession>A7ZJ15</accession>
<proteinExistence type="inferred from homology"/>
<evidence type="ECO:0000255" key="1">
    <source>
        <dbReference type="HAMAP-Rule" id="MF_00206"/>
    </source>
</evidence>
<evidence type="ECO:0000255" key="2">
    <source>
        <dbReference type="PROSITE-ProRule" id="PRU01266"/>
    </source>
</evidence>
<name>LIPA_ECO24</name>
<sequence length="321" mass="36072">MSKPIVMERGVKYRDADKMALIPVKNVATEREALLRKPEWMKIKLPADSTRIQGIKAAMRKNGLHSVCEEASCPNLAECFNHGTATFMILGAICTRRCPFCDVAHGRPVAPDANEPVKLAQTIADMALRYVVITSVDRDDLRDGGAQHFADCITAIREKSPQIKIETLVPDFRGRMDRALDILTATPPDVFNHNLENVPRIYRQVRPGADYNWSLKLLERFKEAHPEIPTKSGLMVGLGETNEEIIEVMRDLRRHGVTMLTLGQYLQPSRHHLPVQRYVSPDEFDEMKAEALAMGFTHAACGPFVRSSYHADLQAKGMEVK</sequence>
<protein>
    <recommendedName>
        <fullName evidence="1">Lipoyl synthase</fullName>
        <ecNumber evidence="1">2.8.1.8</ecNumber>
    </recommendedName>
    <alternativeName>
        <fullName evidence="1">Lip-syn</fullName>
        <shortName evidence="1">LS</shortName>
    </alternativeName>
    <alternativeName>
        <fullName evidence="1">Lipoate synthase</fullName>
    </alternativeName>
    <alternativeName>
        <fullName evidence="1">Lipoic acid synthase</fullName>
    </alternativeName>
    <alternativeName>
        <fullName evidence="1">Sulfur insertion protein LipA</fullName>
    </alternativeName>
</protein>
<dbReference type="EC" id="2.8.1.8" evidence="1"/>
<dbReference type="EMBL" id="CP000800">
    <property type="protein sequence ID" value="ABV18082.1"/>
    <property type="molecule type" value="Genomic_DNA"/>
</dbReference>
<dbReference type="RefSeq" id="WP_000042632.1">
    <property type="nucleotide sequence ID" value="NC_009801.1"/>
</dbReference>
<dbReference type="SMR" id="A7ZJ15"/>
<dbReference type="GeneID" id="93776854"/>
<dbReference type="KEGG" id="ecw:EcE24377A_0652"/>
<dbReference type="HOGENOM" id="CLU_033144_2_1_6"/>
<dbReference type="UniPathway" id="UPA00538">
    <property type="reaction ID" value="UER00593"/>
</dbReference>
<dbReference type="Proteomes" id="UP000001122">
    <property type="component" value="Chromosome"/>
</dbReference>
<dbReference type="GO" id="GO:0005737">
    <property type="term" value="C:cytoplasm"/>
    <property type="evidence" value="ECO:0007669"/>
    <property type="project" value="UniProtKB-SubCell"/>
</dbReference>
<dbReference type="GO" id="GO:0051539">
    <property type="term" value="F:4 iron, 4 sulfur cluster binding"/>
    <property type="evidence" value="ECO:0007669"/>
    <property type="project" value="UniProtKB-UniRule"/>
</dbReference>
<dbReference type="GO" id="GO:0016992">
    <property type="term" value="F:lipoate synthase activity"/>
    <property type="evidence" value="ECO:0007669"/>
    <property type="project" value="UniProtKB-UniRule"/>
</dbReference>
<dbReference type="GO" id="GO:0046872">
    <property type="term" value="F:metal ion binding"/>
    <property type="evidence" value="ECO:0007669"/>
    <property type="project" value="UniProtKB-KW"/>
</dbReference>
<dbReference type="CDD" id="cd01335">
    <property type="entry name" value="Radical_SAM"/>
    <property type="match status" value="1"/>
</dbReference>
<dbReference type="FunFam" id="3.20.20.70:FF:000023">
    <property type="entry name" value="Lipoyl synthase"/>
    <property type="match status" value="1"/>
</dbReference>
<dbReference type="Gene3D" id="3.20.20.70">
    <property type="entry name" value="Aldolase class I"/>
    <property type="match status" value="1"/>
</dbReference>
<dbReference type="HAMAP" id="MF_00206">
    <property type="entry name" value="Lipoyl_synth"/>
    <property type="match status" value="1"/>
</dbReference>
<dbReference type="InterPro" id="IPR013785">
    <property type="entry name" value="Aldolase_TIM"/>
</dbReference>
<dbReference type="InterPro" id="IPR006638">
    <property type="entry name" value="Elp3/MiaA/NifB-like_rSAM"/>
</dbReference>
<dbReference type="InterPro" id="IPR031691">
    <property type="entry name" value="LIAS_N"/>
</dbReference>
<dbReference type="InterPro" id="IPR003698">
    <property type="entry name" value="Lipoyl_synth"/>
</dbReference>
<dbReference type="InterPro" id="IPR007197">
    <property type="entry name" value="rSAM"/>
</dbReference>
<dbReference type="NCBIfam" id="TIGR00510">
    <property type="entry name" value="lipA"/>
    <property type="match status" value="1"/>
</dbReference>
<dbReference type="NCBIfam" id="NF004019">
    <property type="entry name" value="PRK05481.1"/>
    <property type="match status" value="1"/>
</dbReference>
<dbReference type="NCBIfam" id="NF009544">
    <property type="entry name" value="PRK12928.1"/>
    <property type="match status" value="1"/>
</dbReference>
<dbReference type="PANTHER" id="PTHR10949">
    <property type="entry name" value="LIPOYL SYNTHASE"/>
    <property type="match status" value="1"/>
</dbReference>
<dbReference type="PANTHER" id="PTHR10949:SF0">
    <property type="entry name" value="LIPOYL SYNTHASE, MITOCHONDRIAL"/>
    <property type="match status" value="1"/>
</dbReference>
<dbReference type="Pfam" id="PF16881">
    <property type="entry name" value="LIAS_N"/>
    <property type="match status" value="1"/>
</dbReference>
<dbReference type="Pfam" id="PF04055">
    <property type="entry name" value="Radical_SAM"/>
    <property type="match status" value="1"/>
</dbReference>
<dbReference type="PIRSF" id="PIRSF005963">
    <property type="entry name" value="Lipoyl_synth"/>
    <property type="match status" value="1"/>
</dbReference>
<dbReference type="SFLD" id="SFLDF00271">
    <property type="entry name" value="lipoyl_synthase"/>
    <property type="match status" value="1"/>
</dbReference>
<dbReference type="SFLD" id="SFLDG01058">
    <property type="entry name" value="lipoyl_synthase_like"/>
    <property type="match status" value="1"/>
</dbReference>
<dbReference type="SMART" id="SM00729">
    <property type="entry name" value="Elp3"/>
    <property type="match status" value="1"/>
</dbReference>
<dbReference type="SUPFAM" id="SSF102114">
    <property type="entry name" value="Radical SAM enzymes"/>
    <property type="match status" value="1"/>
</dbReference>
<dbReference type="PROSITE" id="PS51918">
    <property type="entry name" value="RADICAL_SAM"/>
    <property type="match status" value="1"/>
</dbReference>
<keyword id="KW-0004">4Fe-4S</keyword>
<keyword id="KW-0963">Cytoplasm</keyword>
<keyword id="KW-0408">Iron</keyword>
<keyword id="KW-0411">Iron-sulfur</keyword>
<keyword id="KW-0479">Metal-binding</keyword>
<keyword id="KW-1185">Reference proteome</keyword>
<keyword id="KW-0949">S-adenosyl-L-methionine</keyword>
<keyword id="KW-0808">Transferase</keyword>
<organism>
    <name type="scientific">Escherichia coli O139:H28 (strain E24377A / ETEC)</name>
    <dbReference type="NCBI Taxonomy" id="331111"/>
    <lineage>
        <taxon>Bacteria</taxon>
        <taxon>Pseudomonadati</taxon>
        <taxon>Pseudomonadota</taxon>
        <taxon>Gammaproteobacteria</taxon>
        <taxon>Enterobacterales</taxon>
        <taxon>Enterobacteriaceae</taxon>
        <taxon>Escherichia</taxon>
    </lineage>
</organism>
<comment type="function">
    <text evidence="1">Catalyzes the radical-mediated insertion of two sulfur atoms into the C-6 and C-8 positions of the octanoyl moiety bound to the lipoyl domains of lipoate-dependent enzymes, thereby converting the octanoylated domains into lipoylated derivatives.</text>
</comment>
<comment type="catalytic activity">
    <reaction evidence="1">
        <text>[[Fe-S] cluster scaffold protein carrying a second [4Fe-4S](2+) cluster] + N(6)-octanoyl-L-lysyl-[protein] + 2 oxidized [2Fe-2S]-[ferredoxin] + 2 S-adenosyl-L-methionine + 4 H(+) = [[Fe-S] cluster scaffold protein] + N(6)-[(R)-dihydrolipoyl]-L-lysyl-[protein] + 4 Fe(3+) + 2 hydrogen sulfide + 2 5'-deoxyadenosine + 2 L-methionine + 2 reduced [2Fe-2S]-[ferredoxin]</text>
        <dbReference type="Rhea" id="RHEA:16585"/>
        <dbReference type="Rhea" id="RHEA-COMP:9928"/>
        <dbReference type="Rhea" id="RHEA-COMP:10000"/>
        <dbReference type="Rhea" id="RHEA-COMP:10001"/>
        <dbReference type="Rhea" id="RHEA-COMP:10475"/>
        <dbReference type="Rhea" id="RHEA-COMP:14568"/>
        <dbReference type="Rhea" id="RHEA-COMP:14569"/>
        <dbReference type="ChEBI" id="CHEBI:15378"/>
        <dbReference type="ChEBI" id="CHEBI:17319"/>
        <dbReference type="ChEBI" id="CHEBI:29034"/>
        <dbReference type="ChEBI" id="CHEBI:29919"/>
        <dbReference type="ChEBI" id="CHEBI:33722"/>
        <dbReference type="ChEBI" id="CHEBI:33737"/>
        <dbReference type="ChEBI" id="CHEBI:33738"/>
        <dbReference type="ChEBI" id="CHEBI:57844"/>
        <dbReference type="ChEBI" id="CHEBI:59789"/>
        <dbReference type="ChEBI" id="CHEBI:78809"/>
        <dbReference type="ChEBI" id="CHEBI:83100"/>
        <dbReference type="EC" id="2.8.1.8"/>
    </reaction>
</comment>
<comment type="cofactor">
    <cofactor evidence="1">
        <name>[4Fe-4S] cluster</name>
        <dbReference type="ChEBI" id="CHEBI:49883"/>
    </cofactor>
    <text evidence="1">Binds 2 [4Fe-4S] clusters per subunit. One cluster is coordinated with 3 cysteines and an exchangeable S-adenosyl-L-methionine.</text>
</comment>
<comment type="pathway">
    <text evidence="1">Protein modification; protein lipoylation via endogenous pathway; protein N(6)-(lipoyl)lysine from octanoyl-[acyl-carrier-protein]: step 2/2.</text>
</comment>
<comment type="subcellular location">
    <subcellularLocation>
        <location evidence="1">Cytoplasm</location>
    </subcellularLocation>
</comment>
<comment type="similarity">
    <text evidence="1">Belongs to the radical SAM superfamily. Lipoyl synthase family.</text>
</comment>
<feature type="chain" id="PRO_1000058574" description="Lipoyl synthase">
    <location>
        <begin position="1"/>
        <end position="321"/>
    </location>
</feature>
<feature type="domain" description="Radical SAM core" evidence="2">
    <location>
        <begin position="80"/>
        <end position="297"/>
    </location>
</feature>
<feature type="binding site" evidence="1">
    <location>
        <position position="68"/>
    </location>
    <ligand>
        <name>[4Fe-4S] cluster</name>
        <dbReference type="ChEBI" id="CHEBI:49883"/>
        <label>1</label>
    </ligand>
</feature>
<feature type="binding site" evidence="1">
    <location>
        <position position="73"/>
    </location>
    <ligand>
        <name>[4Fe-4S] cluster</name>
        <dbReference type="ChEBI" id="CHEBI:49883"/>
        <label>1</label>
    </ligand>
</feature>
<feature type="binding site" evidence="1">
    <location>
        <position position="79"/>
    </location>
    <ligand>
        <name>[4Fe-4S] cluster</name>
        <dbReference type="ChEBI" id="CHEBI:49883"/>
        <label>1</label>
    </ligand>
</feature>
<feature type="binding site" evidence="1">
    <location>
        <position position="94"/>
    </location>
    <ligand>
        <name>[4Fe-4S] cluster</name>
        <dbReference type="ChEBI" id="CHEBI:49883"/>
        <label>2</label>
        <note>4Fe-4S-S-AdoMet</note>
    </ligand>
</feature>
<feature type="binding site" evidence="1">
    <location>
        <position position="98"/>
    </location>
    <ligand>
        <name>[4Fe-4S] cluster</name>
        <dbReference type="ChEBI" id="CHEBI:49883"/>
        <label>2</label>
        <note>4Fe-4S-S-AdoMet</note>
    </ligand>
</feature>
<feature type="binding site" evidence="1">
    <location>
        <position position="101"/>
    </location>
    <ligand>
        <name>[4Fe-4S] cluster</name>
        <dbReference type="ChEBI" id="CHEBI:49883"/>
        <label>2</label>
        <note>4Fe-4S-S-AdoMet</note>
    </ligand>
</feature>
<feature type="binding site" evidence="1">
    <location>
        <position position="308"/>
    </location>
    <ligand>
        <name>[4Fe-4S] cluster</name>
        <dbReference type="ChEBI" id="CHEBI:49883"/>
        <label>1</label>
    </ligand>
</feature>
<reference key="1">
    <citation type="journal article" date="2008" name="J. Bacteriol.">
        <title>The pangenome structure of Escherichia coli: comparative genomic analysis of E. coli commensal and pathogenic isolates.</title>
        <authorList>
            <person name="Rasko D.A."/>
            <person name="Rosovitz M.J."/>
            <person name="Myers G.S.A."/>
            <person name="Mongodin E.F."/>
            <person name="Fricke W.F."/>
            <person name="Gajer P."/>
            <person name="Crabtree J."/>
            <person name="Sebaihia M."/>
            <person name="Thomson N.R."/>
            <person name="Chaudhuri R."/>
            <person name="Henderson I.R."/>
            <person name="Sperandio V."/>
            <person name="Ravel J."/>
        </authorList>
    </citation>
    <scope>NUCLEOTIDE SEQUENCE [LARGE SCALE GENOMIC DNA]</scope>
    <source>
        <strain>E24377A / ETEC</strain>
    </source>
</reference>
<gene>
    <name evidence="1" type="primary">lipA</name>
    <name type="ordered locus">EcE24377A_0652</name>
</gene>